<protein>
    <recommendedName>
        <fullName evidence="1">ATP synthase subunit c, chloroplastic</fullName>
    </recommendedName>
    <alternativeName>
        <fullName evidence="1">ATP synthase F(0) sector subunit c</fullName>
    </alternativeName>
    <alternativeName>
        <fullName evidence="1">ATPase subunit III</fullName>
    </alternativeName>
    <alternativeName>
        <fullName evidence="1">F-type ATPase subunit c</fullName>
        <shortName evidence="1">F-ATPase subunit c</shortName>
    </alternativeName>
    <alternativeName>
        <fullName evidence="1">Lipid-binding protein</fullName>
    </alternativeName>
</protein>
<gene>
    <name evidence="1" type="primary">atpH</name>
</gene>
<accession>B0Z4W4</accession>
<organism>
    <name type="scientific">Oenothera biennis</name>
    <name type="common">German evening primrose</name>
    <name type="synonym">Onagra biennis</name>
    <dbReference type="NCBI Taxonomy" id="3942"/>
    <lineage>
        <taxon>Eukaryota</taxon>
        <taxon>Viridiplantae</taxon>
        <taxon>Streptophyta</taxon>
        <taxon>Embryophyta</taxon>
        <taxon>Tracheophyta</taxon>
        <taxon>Spermatophyta</taxon>
        <taxon>Magnoliopsida</taxon>
        <taxon>eudicotyledons</taxon>
        <taxon>Gunneridae</taxon>
        <taxon>Pentapetalae</taxon>
        <taxon>rosids</taxon>
        <taxon>malvids</taxon>
        <taxon>Myrtales</taxon>
        <taxon>Onagraceae</taxon>
        <taxon>Onagroideae</taxon>
        <taxon>Onagreae</taxon>
        <taxon>Oenothera</taxon>
    </lineage>
</organism>
<proteinExistence type="inferred from homology"/>
<dbReference type="EMBL" id="EU262889">
    <property type="protein sequence ID" value="ABW98876.1"/>
    <property type="molecule type" value="Genomic_DNA"/>
</dbReference>
<dbReference type="RefSeq" id="YP_001687371.1">
    <property type="nucleotide sequence ID" value="NC_010361.1"/>
</dbReference>
<dbReference type="SMR" id="B0Z4W4"/>
<dbReference type="GeneID" id="5952071"/>
<dbReference type="GO" id="GO:0009535">
    <property type="term" value="C:chloroplast thylakoid membrane"/>
    <property type="evidence" value="ECO:0007669"/>
    <property type="project" value="UniProtKB-SubCell"/>
</dbReference>
<dbReference type="GO" id="GO:0045259">
    <property type="term" value="C:proton-transporting ATP synthase complex"/>
    <property type="evidence" value="ECO:0007669"/>
    <property type="project" value="UniProtKB-KW"/>
</dbReference>
<dbReference type="GO" id="GO:0033177">
    <property type="term" value="C:proton-transporting two-sector ATPase complex, proton-transporting domain"/>
    <property type="evidence" value="ECO:0007669"/>
    <property type="project" value="InterPro"/>
</dbReference>
<dbReference type="GO" id="GO:0008289">
    <property type="term" value="F:lipid binding"/>
    <property type="evidence" value="ECO:0007669"/>
    <property type="project" value="UniProtKB-KW"/>
</dbReference>
<dbReference type="GO" id="GO:0046933">
    <property type="term" value="F:proton-transporting ATP synthase activity, rotational mechanism"/>
    <property type="evidence" value="ECO:0007669"/>
    <property type="project" value="UniProtKB-UniRule"/>
</dbReference>
<dbReference type="CDD" id="cd18183">
    <property type="entry name" value="ATP-synt_Fo_c_ATPH"/>
    <property type="match status" value="1"/>
</dbReference>
<dbReference type="FunFam" id="1.20.20.10:FF:000001">
    <property type="entry name" value="ATP synthase subunit c, chloroplastic"/>
    <property type="match status" value="1"/>
</dbReference>
<dbReference type="Gene3D" id="1.20.20.10">
    <property type="entry name" value="F1F0 ATP synthase subunit C"/>
    <property type="match status" value="1"/>
</dbReference>
<dbReference type="HAMAP" id="MF_01396">
    <property type="entry name" value="ATP_synth_c_bact"/>
    <property type="match status" value="1"/>
</dbReference>
<dbReference type="InterPro" id="IPR005953">
    <property type="entry name" value="ATP_synth_csu_bac/chlpt"/>
</dbReference>
<dbReference type="InterPro" id="IPR000454">
    <property type="entry name" value="ATP_synth_F0_csu"/>
</dbReference>
<dbReference type="InterPro" id="IPR020537">
    <property type="entry name" value="ATP_synth_F0_csu_DDCD_BS"/>
</dbReference>
<dbReference type="InterPro" id="IPR038662">
    <property type="entry name" value="ATP_synth_F0_csu_sf"/>
</dbReference>
<dbReference type="InterPro" id="IPR002379">
    <property type="entry name" value="ATPase_proteolipid_c-like_dom"/>
</dbReference>
<dbReference type="InterPro" id="IPR035921">
    <property type="entry name" value="F/V-ATP_Csub_sf"/>
</dbReference>
<dbReference type="NCBIfam" id="TIGR01260">
    <property type="entry name" value="ATP_synt_c"/>
    <property type="match status" value="1"/>
</dbReference>
<dbReference type="NCBIfam" id="NF005608">
    <property type="entry name" value="PRK07354.1"/>
    <property type="match status" value="1"/>
</dbReference>
<dbReference type="PANTHER" id="PTHR10031">
    <property type="entry name" value="ATP SYNTHASE LIPID-BINDING PROTEIN, MITOCHONDRIAL"/>
    <property type="match status" value="1"/>
</dbReference>
<dbReference type="PANTHER" id="PTHR10031:SF0">
    <property type="entry name" value="ATPASE PROTEIN 9"/>
    <property type="match status" value="1"/>
</dbReference>
<dbReference type="Pfam" id="PF00137">
    <property type="entry name" value="ATP-synt_C"/>
    <property type="match status" value="1"/>
</dbReference>
<dbReference type="PRINTS" id="PR00124">
    <property type="entry name" value="ATPASEC"/>
</dbReference>
<dbReference type="SUPFAM" id="SSF81333">
    <property type="entry name" value="F1F0 ATP synthase subunit C"/>
    <property type="match status" value="1"/>
</dbReference>
<dbReference type="PROSITE" id="PS00605">
    <property type="entry name" value="ATPASE_C"/>
    <property type="match status" value="1"/>
</dbReference>
<evidence type="ECO:0000255" key="1">
    <source>
        <dbReference type="HAMAP-Rule" id="MF_01396"/>
    </source>
</evidence>
<comment type="function">
    <text evidence="1">F(1)F(0) ATP synthase produces ATP from ADP in the presence of a proton or sodium gradient. F-type ATPases consist of two structural domains, F(1) containing the extramembraneous catalytic core and F(0) containing the membrane proton channel, linked together by a central stalk and a peripheral stalk. During catalysis, ATP synthesis in the catalytic domain of F(1) is coupled via a rotary mechanism of the central stalk subunits to proton translocation.</text>
</comment>
<comment type="function">
    <text evidence="1">Key component of the F(0) channel; it plays a direct role in translocation across the membrane. A homomeric c-ring of between 10-14 subunits forms the central stalk rotor element with the F(1) delta and epsilon subunits.</text>
</comment>
<comment type="subunit">
    <text evidence="1">F-type ATPases have 2 components, F(1) - the catalytic core - and F(0) - the membrane proton channel. F(1) has five subunits: alpha(3), beta(3), gamma(1), delta(1), epsilon(1). F(0) has four main subunits: a(1), b(1), b'(1) and c(10-14). The alpha and beta chains form an alternating ring which encloses part of the gamma chain. F(1) is attached to F(0) by a central stalk formed by the gamma and epsilon chains, while a peripheral stalk is formed by the delta, b and b' chains.</text>
</comment>
<comment type="subcellular location">
    <subcellularLocation>
        <location evidence="1">Plastid</location>
        <location evidence="1">Chloroplast thylakoid membrane</location>
        <topology evidence="1">Multi-pass membrane protein</topology>
    </subcellularLocation>
</comment>
<comment type="miscellaneous">
    <text>In plastids the F-type ATPase is also known as CF(1)CF(0).</text>
</comment>
<comment type="similarity">
    <text evidence="1">Belongs to the ATPase C chain family.</text>
</comment>
<name>ATPH_OENBI</name>
<reference key="1">
    <citation type="journal article" date="2008" name="Nucleic Acids Res.">
        <title>The complete nucleotide sequences of the five genetically distinct plastid genomes of Oenothera, subsection Oenothera: I. Sequence evaluation and plastome evolution.</title>
        <authorList>
            <person name="Greiner S."/>
            <person name="Wang X."/>
            <person name="Rauwolf U."/>
            <person name="Silber M.V."/>
            <person name="Mayer K."/>
            <person name="Meurer J."/>
            <person name="Haberer G."/>
            <person name="Herrmann R.G."/>
        </authorList>
    </citation>
    <scope>NUCLEOTIDE SEQUENCE [LARGE SCALE GENOMIC DNA]</scope>
    <source>
        <strain>cv. Suaveolens Grado</strain>
    </source>
</reference>
<geneLocation type="chloroplast"/>
<sequence>MNPLISAASVIAAGLAVGLASIGPGIGQGTAAGQAVEGIARQPEAEGKIRGTLLLSLAFMEALTIYGLVVALALLFANPFV</sequence>
<feature type="chain" id="PRO_0000362944" description="ATP synthase subunit c, chloroplastic">
    <location>
        <begin position="1"/>
        <end position="81"/>
    </location>
</feature>
<feature type="transmembrane region" description="Helical" evidence="1">
    <location>
        <begin position="7"/>
        <end position="27"/>
    </location>
</feature>
<feature type="transmembrane region" description="Helical" evidence="1">
    <location>
        <begin position="57"/>
        <end position="77"/>
    </location>
</feature>
<feature type="site" description="Reversibly protonated during proton transport" evidence="1">
    <location>
        <position position="61"/>
    </location>
</feature>
<keyword id="KW-0066">ATP synthesis</keyword>
<keyword id="KW-0138">CF(0)</keyword>
<keyword id="KW-0150">Chloroplast</keyword>
<keyword id="KW-0375">Hydrogen ion transport</keyword>
<keyword id="KW-0406">Ion transport</keyword>
<keyword id="KW-0446">Lipid-binding</keyword>
<keyword id="KW-0472">Membrane</keyword>
<keyword id="KW-0934">Plastid</keyword>
<keyword id="KW-0793">Thylakoid</keyword>
<keyword id="KW-0812">Transmembrane</keyword>
<keyword id="KW-1133">Transmembrane helix</keyword>
<keyword id="KW-0813">Transport</keyword>